<sequence length="176" mass="19120">MARFLLATQATPTISATDANPRTLGDSVSNNKNIASMDTHMVIILAALLCALICALGINSVLRCVLRCTRRFTPNEDPVDTNANVAKGIKKRALKVIPVDSYSPELKMKATECLICLGDFVEGETVRVLPKCNHGFHVKCIDTWLLSHSSCPTCRQSLLEHQTPANGSRRGDDVAT</sequence>
<feature type="signal peptide" evidence="2">
    <location>
        <begin position="1"/>
        <end position="16"/>
    </location>
</feature>
<feature type="chain" id="PRO_0000030714" description="RING-H2 finger protein ATL73">
    <location>
        <begin position="17"/>
        <end position="176"/>
    </location>
</feature>
<feature type="transmembrane region" description="Helical" evidence="2">
    <location>
        <begin position="42"/>
        <end position="62"/>
    </location>
</feature>
<feature type="zinc finger region" description="RING-type; atypical" evidence="3">
    <location>
        <begin position="113"/>
        <end position="155"/>
    </location>
</feature>
<proteinExistence type="evidence at transcript level"/>
<dbReference type="EC" id="2.3.2.27" evidence="4"/>
<dbReference type="EMBL" id="AB010692">
    <property type="protein sequence ID" value="BAB09971.1"/>
    <property type="molecule type" value="Genomic_DNA"/>
</dbReference>
<dbReference type="EMBL" id="CP002688">
    <property type="protein sequence ID" value="AED90850.1"/>
    <property type="molecule type" value="Genomic_DNA"/>
</dbReference>
<dbReference type="EMBL" id="BX830198">
    <property type="status" value="NOT_ANNOTATED_CDS"/>
    <property type="molecule type" value="mRNA"/>
</dbReference>
<dbReference type="RefSeq" id="NP_196147.1">
    <property type="nucleotide sequence ID" value="NM_120610.2"/>
</dbReference>
<dbReference type="SMR" id="Q9FLC6"/>
<dbReference type="STRING" id="3702.Q9FLC6"/>
<dbReference type="PaxDb" id="3702-AT5G05280.1"/>
<dbReference type="EnsemblPlants" id="AT5G05280.1">
    <property type="protein sequence ID" value="AT5G05280.1"/>
    <property type="gene ID" value="AT5G05280"/>
</dbReference>
<dbReference type="GeneID" id="830410"/>
<dbReference type="Gramene" id="AT5G05280.1">
    <property type="protein sequence ID" value="AT5G05280.1"/>
    <property type="gene ID" value="AT5G05280"/>
</dbReference>
<dbReference type="KEGG" id="ath:AT5G05280"/>
<dbReference type="Araport" id="AT5G05280"/>
<dbReference type="TAIR" id="AT5G05280">
    <property type="gene designation" value="DAF"/>
</dbReference>
<dbReference type="eggNOG" id="KOG0800">
    <property type="taxonomic scope" value="Eukaryota"/>
</dbReference>
<dbReference type="HOGENOM" id="CLU_013137_9_3_1"/>
<dbReference type="InParanoid" id="Q9FLC6"/>
<dbReference type="OMA" id="AMECLIC"/>
<dbReference type="OrthoDB" id="8062037at2759"/>
<dbReference type="PhylomeDB" id="Q9FLC6"/>
<dbReference type="UniPathway" id="UPA00143"/>
<dbReference type="PRO" id="PR:Q9FLC6"/>
<dbReference type="Proteomes" id="UP000006548">
    <property type="component" value="Chromosome 5"/>
</dbReference>
<dbReference type="ExpressionAtlas" id="Q9FLC6">
    <property type="expression patterns" value="baseline and differential"/>
</dbReference>
<dbReference type="GO" id="GO:0016020">
    <property type="term" value="C:membrane"/>
    <property type="evidence" value="ECO:0007669"/>
    <property type="project" value="UniProtKB-SubCell"/>
</dbReference>
<dbReference type="GO" id="GO:0004842">
    <property type="term" value="F:ubiquitin-protein transferase activity"/>
    <property type="evidence" value="ECO:0000314"/>
    <property type="project" value="TAIR"/>
</dbReference>
<dbReference type="GO" id="GO:0008270">
    <property type="term" value="F:zinc ion binding"/>
    <property type="evidence" value="ECO:0007669"/>
    <property type="project" value="UniProtKB-KW"/>
</dbReference>
<dbReference type="GO" id="GO:0009901">
    <property type="term" value="P:anther dehiscence"/>
    <property type="evidence" value="ECO:0000315"/>
    <property type="project" value="TAIR"/>
</dbReference>
<dbReference type="GO" id="GO:0009555">
    <property type="term" value="P:pollen development"/>
    <property type="evidence" value="ECO:0000315"/>
    <property type="project" value="TAIR"/>
</dbReference>
<dbReference type="GO" id="GO:0016567">
    <property type="term" value="P:protein ubiquitination"/>
    <property type="evidence" value="ECO:0000314"/>
    <property type="project" value="TAIR"/>
</dbReference>
<dbReference type="GO" id="GO:0080141">
    <property type="term" value="P:regulation of jasmonic acid biosynthetic process"/>
    <property type="evidence" value="ECO:0000315"/>
    <property type="project" value="TAIR"/>
</dbReference>
<dbReference type="GO" id="GO:0048443">
    <property type="term" value="P:stamen development"/>
    <property type="evidence" value="ECO:0000315"/>
    <property type="project" value="TAIR"/>
</dbReference>
<dbReference type="CDD" id="cd16461">
    <property type="entry name" value="RING-H2_EL5-like"/>
    <property type="match status" value="1"/>
</dbReference>
<dbReference type="FunFam" id="3.30.40.10:FF:000632">
    <property type="entry name" value="RING-H2 finger protein ATL73"/>
    <property type="match status" value="1"/>
</dbReference>
<dbReference type="Gene3D" id="3.30.40.10">
    <property type="entry name" value="Zinc/RING finger domain, C3HC4 (zinc finger)"/>
    <property type="match status" value="1"/>
</dbReference>
<dbReference type="InterPro" id="IPR044602">
    <property type="entry name" value="ATL10/ATL72-79-like"/>
</dbReference>
<dbReference type="InterPro" id="IPR001841">
    <property type="entry name" value="Znf_RING"/>
</dbReference>
<dbReference type="InterPro" id="IPR013083">
    <property type="entry name" value="Znf_RING/FYVE/PHD"/>
</dbReference>
<dbReference type="PANTHER" id="PTHR46905">
    <property type="entry name" value="RING-H2 FINGER PROTEIN ATL78"/>
    <property type="match status" value="1"/>
</dbReference>
<dbReference type="PANTHER" id="PTHR46905:SF21">
    <property type="entry name" value="RING-TYPE E3 UBIQUITIN TRANSFERASE"/>
    <property type="match status" value="1"/>
</dbReference>
<dbReference type="Pfam" id="PF13639">
    <property type="entry name" value="zf-RING_2"/>
    <property type="match status" value="1"/>
</dbReference>
<dbReference type="SMART" id="SM00184">
    <property type="entry name" value="RING"/>
    <property type="match status" value="1"/>
</dbReference>
<dbReference type="SUPFAM" id="SSF57850">
    <property type="entry name" value="RING/U-box"/>
    <property type="match status" value="1"/>
</dbReference>
<dbReference type="PROSITE" id="PS50089">
    <property type="entry name" value="ZF_RING_2"/>
    <property type="match status" value="1"/>
</dbReference>
<accession>Q9FLC6</accession>
<reference key="1">
    <citation type="journal article" date="1998" name="DNA Res.">
        <title>Structural analysis of Arabidopsis thaliana chromosome 5. V. Sequence features of the regions of 1,381,565 bp covered by twenty one physically assigned P1 and TAC clones.</title>
        <authorList>
            <person name="Kaneko T."/>
            <person name="Kotani H."/>
            <person name="Nakamura Y."/>
            <person name="Sato S."/>
            <person name="Asamizu E."/>
            <person name="Miyajima N."/>
            <person name="Tabata S."/>
        </authorList>
    </citation>
    <scope>NUCLEOTIDE SEQUENCE [LARGE SCALE GENOMIC DNA]</scope>
    <source>
        <strain>cv. Columbia</strain>
    </source>
</reference>
<reference key="2">
    <citation type="journal article" date="2017" name="Plant J.">
        <title>Araport11: a complete reannotation of the Arabidopsis thaliana reference genome.</title>
        <authorList>
            <person name="Cheng C.Y."/>
            <person name="Krishnakumar V."/>
            <person name="Chan A.P."/>
            <person name="Thibaud-Nissen F."/>
            <person name="Schobel S."/>
            <person name="Town C.D."/>
        </authorList>
    </citation>
    <scope>GENOME REANNOTATION</scope>
    <source>
        <strain>cv. Columbia</strain>
    </source>
</reference>
<reference key="3">
    <citation type="journal article" date="2004" name="Genome Res.">
        <title>Whole genome sequence comparisons and 'full-length' cDNA sequences: a combined approach to evaluate and improve Arabidopsis genome annotation.</title>
        <authorList>
            <person name="Castelli V."/>
            <person name="Aury J.-M."/>
            <person name="Jaillon O."/>
            <person name="Wincker P."/>
            <person name="Clepet C."/>
            <person name="Menard M."/>
            <person name="Cruaud C."/>
            <person name="Quetier F."/>
            <person name="Scarpelli C."/>
            <person name="Schaechter V."/>
            <person name="Temple G."/>
            <person name="Caboche M."/>
            <person name="Weissenbach J."/>
            <person name="Salanoubat M."/>
        </authorList>
    </citation>
    <scope>NUCLEOTIDE SEQUENCE [LARGE SCALE MRNA]</scope>
    <source>
        <strain>cv. Columbia</strain>
    </source>
</reference>
<reference key="4">
    <citation type="journal article" date="2002" name="Genome Biol.">
        <title>Evaluation and classification of RING-finger domains encoded by the Arabidopsis genome.</title>
        <authorList>
            <person name="Kosarev P."/>
            <person name="Mayer K.F.X."/>
            <person name="Hardtke C.S."/>
        </authorList>
    </citation>
    <scope>GENE FAMILY ORGANIZATION</scope>
</reference>
<reference key="5">
    <citation type="journal article" date="2006" name="J. Mol. Evol.">
        <title>The ATL gene family from Arabidopsis thaliana and Oryza sativa comprises a large number of putative ubiquitin ligases of the RING-H2 type.</title>
        <authorList>
            <person name="Serrano M."/>
            <person name="Parra S."/>
            <person name="Alcaraz L.D."/>
            <person name="Guzman P."/>
        </authorList>
    </citation>
    <scope>NOMENCLATURE</scope>
    <scope>GENE FAMILY ORGANIZATION</scope>
</reference>
<organism>
    <name type="scientific">Arabidopsis thaliana</name>
    <name type="common">Mouse-ear cress</name>
    <dbReference type="NCBI Taxonomy" id="3702"/>
    <lineage>
        <taxon>Eukaryota</taxon>
        <taxon>Viridiplantae</taxon>
        <taxon>Streptophyta</taxon>
        <taxon>Embryophyta</taxon>
        <taxon>Tracheophyta</taxon>
        <taxon>Spermatophyta</taxon>
        <taxon>Magnoliopsida</taxon>
        <taxon>eudicotyledons</taxon>
        <taxon>Gunneridae</taxon>
        <taxon>Pentapetalae</taxon>
        <taxon>rosids</taxon>
        <taxon>malvids</taxon>
        <taxon>Brassicales</taxon>
        <taxon>Brassicaceae</taxon>
        <taxon>Camelineae</taxon>
        <taxon>Arabidopsis</taxon>
    </lineage>
</organism>
<protein>
    <recommendedName>
        <fullName>RING-H2 finger protein ATL73</fullName>
        <ecNumber evidence="4">2.3.2.27</ecNumber>
    </recommendedName>
    <alternativeName>
        <fullName evidence="4">RING-type E3 ubiquitin transferase ATL73</fullName>
    </alternativeName>
</protein>
<evidence type="ECO:0000250" key="1"/>
<evidence type="ECO:0000255" key="2"/>
<evidence type="ECO:0000255" key="3">
    <source>
        <dbReference type="PROSITE-ProRule" id="PRU00175"/>
    </source>
</evidence>
<evidence type="ECO:0000305" key="4"/>
<comment type="catalytic activity">
    <reaction evidence="4">
        <text>S-ubiquitinyl-[E2 ubiquitin-conjugating enzyme]-L-cysteine + [acceptor protein]-L-lysine = [E2 ubiquitin-conjugating enzyme]-L-cysteine + N(6)-ubiquitinyl-[acceptor protein]-L-lysine.</text>
        <dbReference type="EC" id="2.3.2.27"/>
    </reaction>
</comment>
<comment type="pathway">
    <text>Protein modification; protein ubiquitination.</text>
</comment>
<comment type="subcellular location">
    <subcellularLocation>
        <location evidence="4">Membrane</location>
        <topology evidence="4">Single-pass membrane protein</topology>
    </subcellularLocation>
</comment>
<comment type="domain">
    <text evidence="1">The RING-type zinc finger domain mediates binding to an E2 ubiquitin-conjugating enzyme.</text>
</comment>
<comment type="similarity">
    <text evidence="4">Belongs to the RING-type zinc finger family. ATL subfamily.</text>
</comment>
<name>ATL73_ARATH</name>
<keyword id="KW-0472">Membrane</keyword>
<keyword id="KW-0479">Metal-binding</keyword>
<keyword id="KW-1185">Reference proteome</keyword>
<keyword id="KW-0732">Signal</keyword>
<keyword id="KW-0808">Transferase</keyword>
<keyword id="KW-0812">Transmembrane</keyword>
<keyword id="KW-1133">Transmembrane helix</keyword>
<keyword id="KW-0833">Ubl conjugation pathway</keyword>
<keyword id="KW-0862">Zinc</keyword>
<keyword id="KW-0863">Zinc-finger</keyword>
<gene>
    <name type="primary">ATL73</name>
    <name type="ordered locus">At5g05280</name>
    <name type="ORF">K18I23.8</name>
</gene>